<gene>
    <name evidence="1" type="primary">fumD</name>
    <name type="synonym">ydhZ</name>
    <name type="ordered locus">Z2703</name>
    <name type="ordered locus">ECs2382</name>
</gene>
<comment type="function">
    <text evidence="1">In vitro catalyzes the addition of water to fumarate, forming malate. Cannot catalyze the reverse reaction. Cannot use the cis-isomer maleate as substrate.</text>
</comment>
<comment type="catalytic activity">
    <reaction evidence="1">
        <text>(S)-malate = fumarate + H2O</text>
        <dbReference type="Rhea" id="RHEA:12460"/>
        <dbReference type="ChEBI" id="CHEBI:15377"/>
        <dbReference type="ChEBI" id="CHEBI:15589"/>
        <dbReference type="ChEBI" id="CHEBI:29806"/>
        <dbReference type="EC" id="4.2.1.2"/>
    </reaction>
</comment>
<comment type="similarity">
    <text evidence="2">Belongs to the FumD family.</text>
</comment>
<evidence type="ECO:0000250" key="1">
    <source>
        <dbReference type="UniProtKB" id="P0ACX5"/>
    </source>
</evidence>
<evidence type="ECO:0000305" key="2"/>
<feature type="chain" id="PRO_0000168983" description="Fumarase D">
    <location>
        <begin position="1"/>
        <end position="69"/>
    </location>
</feature>
<sequence>MGNRTKEDELYREMCRVVGKVVLEMRDLGQEPKHIVIAGVLRTALANKRIQRSELEKQAMETVINALVK</sequence>
<protein>
    <recommendedName>
        <fullName evidence="1">Fumarase D</fullName>
        <ecNumber evidence="1">4.2.1.2</ecNumber>
    </recommendedName>
</protein>
<reference key="1">
    <citation type="journal article" date="2001" name="Nature">
        <title>Genome sequence of enterohaemorrhagic Escherichia coli O157:H7.</title>
        <authorList>
            <person name="Perna N.T."/>
            <person name="Plunkett G. III"/>
            <person name="Burland V."/>
            <person name="Mau B."/>
            <person name="Glasner J.D."/>
            <person name="Rose D.J."/>
            <person name="Mayhew G.F."/>
            <person name="Evans P.S."/>
            <person name="Gregor J."/>
            <person name="Kirkpatrick H.A."/>
            <person name="Posfai G."/>
            <person name="Hackett J."/>
            <person name="Klink S."/>
            <person name="Boutin A."/>
            <person name="Shao Y."/>
            <person name="Miller L."/>
            <person name="Grotbeck E.J."/>
            <person name="Davis N.W."/>
            <person name="Lim A."/>
            <person name="Dimalanta E.T."/>
            <person name="Potamousis K."/>
            <person name="Apodaca J."/>
            <person name="Anantharaman T.S."/>
            <person name="Lin J."/>
            <person name="Yen G."/>
            <person name="Schwartz D.C."/>
            <person name="Welch R.A."/>
            <person name="Blattner F.R."/>
        </authorList>
    </citation>
    <scope>NUCLEOTIDE SEQUENCE [LARGE SCALE GENOMIC DNA]</scope>
    <source>
        <strain>O157:H7 / EDL933 / ATCC 700927 / EHEC</strain>
    </source>
</reference>
<reference key="2">
    <citation type="journal article" date="2001" name="DNA Res.">
        <title>Complete genome sequence of enterohemorrhagic Escherichia coli O157:H7 and genomic comparison with a laboratory strain K-12.</title>
        <authorList>
            <person name="Hayashi T."/>
            <person name="Makino K."/>
            <person name="Ohnishi M."/>
            <person name="Kurokawa K."/>
            <person name="Ishii K."/>
            <person name="Yokoyama K."/>
            <person name="Han C.-G."/>
            <person name="Ohtsubo E."/>
            <person name="Nakayama K."/>
            <person name="Murata T."/>
            <person name="Tanaka M."/>
            <person name="Tobe T."/>
            <person name="Iida T."/>
            <person name="Takami H."/>
            <person name="Honda T."/>
            <person name="Sasakawa C."/>
            <person name="Ogasawara N."/>
            <person name="Yasunaga T."/>
            <person name="Kuhara S."/>
            <person name="Shiba T."/>
            <person name="Hattori M."/>
            <person name="Shinagawa H."/>
        </authorList>
    </citation>
    <scope>NUCLEOTIDE SEQUENCE [LARGE SCALE GENOMIC DNA]</scope>
    <source>
        <strain>O157:H7 / Sakai / RIMD 0509952 / EHEC</strain>
    </source>
</reference>
<name>FUMD_ECO57</name>
<dbReference type="EC" id="4.2.1.2" evidence="1"/>
<dbReference type="EMBL" id="AE005174">
    <property type="protein sequence ID" value="AAG56662.1"/>
    <property type="molecule type" value="Genomic_DNA"/>
</dbReference>
<dbReference type="EMBL" id="BA000007">
    <property type="protein sequence ID" value="BAB35805.1"/>
    <property type="molecule type" value="Genomic_DNA"/>
</dbReference>
<dbReference type="PIR" id="B85775">
    <property type="entry name" value="B85775"/>
</dbReference>
<dbReference type="PIR" id="F90926">
    <property type="entry name" value="F90926"/>
</dbReference>
<dbReference type="RefSeq" id="NP_310409.1">
    <property type="nucleotide sequence ID" value="NC_002695.1"/>
</dbReference>
<dbReference type="RefSeq" id="WP_000528342.1">
    <property type="nucleotide sequence ID" value="NZ_VOAI01000007.1"/>
</dbReference>
<dbReference type="SMR" id="P0ACX7"/>
<dbReference type="STRING" id="155864.Z2703"/>
<dbReference type="GeneID" id="914156"/>
<dbReference type="GeneID" id="93775830"/>
<dbReference type="KEGG" id="ece:Z2703"/>
<dbReference type="KEGG" id="ecs:ECs_2382"/>
<dbReference type="PATRIC" id="fig|386585.9.peg.2495"/>
<dbReference type="HOGENOM" id="CLU_2755438_0_0_6"/>
<dbReference type="OMA" id="ALYQEMC"/>
<dbReference type="Proteomes" id="UP000000558">
    <property type="component" value="Chromosome"/>
</dbReference>
<dbReference type="Proteomes" id="UP000002519">
    <property type="component" value="Chromosome"/>
</dbReference>
<dbReference type="GO" id="GO:0004333">
    <property type="term" value="F:fumarate hydratase activity"/>
    <property type="evidence" value="ECO:0007669"/>
    <property type="project" value="UniProtKB-EC"/>
</dbReference>
<dbReference type="InterPro" id="IPR024493">
    <property type="entry name" value="FumD"/>
</dbReference>
<dbReference type="NCBIfam" id="NF007630">
    <property type="entry name" value="PRK10292.1"/>
    <property type="match status" value="1"/>
</dbReference>
<dbReference type="Pfam" id="PF10965">
    <property type="entry name" value="DUF2767"/>
    <property type="match status" value="1"/>
</dbReference>
<organism>
    <name type="scientific">Escherichia coli O157:H7</name>
    <dbReference type="NCBI Taxonomy" id="83334"/>
    <lineage>
        <taxon>Bacteria</taxon>
        <taxon>Pseudomonadati</taxon>
        <taxon>Pseudomonadota</taxon>
        <taxon>Gammaproteobacteria</taxon>
        <taxon>Enterobacterales</taxon>
        <taxon>Enterobacteriaceae</taxon>
        <taxon>Escherichia</taxon>
    </lineage>
</organism>
<proteinExistence type="inferred from homology"/>
<accession>P0ACX7</accession>
<accession>P77274</accession>
<keyword id="KW-0456">Lyase</keyword>
<keyword id="KW-1185">Reference proteome</keyword>